<proteinExistence type="evidence at protein level"/>
<feature type="chain" id="PRO_0000162201" description="Pyruvate dehydrogenase E1 component subunit alpha">
    <location>
        <begin position="1"/>
        <end position="358"/>
    </location>
</feature>
<accession>P75390</accession>
<gene>
    <name type="primary">pdhA</name>
    <name type="ordered locus">MPN_393</name>
    <name type="ORF">MP445</name>
</gene>
<name>ODPA_MYCPN</name>
<protein>
    <recommendedName>
        <fullName>Pyruvate dehydrogenase E1 component subunit alpha</fullName>
        <ecNumber>1.2.4.1</ecNumber>
    </recommendedName>
</protein>
<comment type="function">
    <text evidence="1">The pyruvate dehydrogenase complex catalyzes the overall conversion of pyruvate to acetyl-CoA and CO(2). It contains multiple copies of three enzymatic components: pyruvate dehydrogenase (E1), dihydrolipoamide acetyltransferase (E2) and lipoamide dehydrogenase (E3) (By similarity).</text>
</comment>
<comment type="catalytic activity">
    <reaction>
        <text>N(6)-[(R)-lipoyl]-L-lysyl-[protein] + pyruvate + H(+) = N(6)-[(R)-S(8)-acetyldihydrolipoyl]-L-lysyl-[protein] + CO2</text>
        <dbReference type="Rhea" id="RHEA:19189"/>
        <dbReference type="Rhea" id="RHEA-COMP:10474"/>
        <dbReference type="Rhea" id="RHEA-COMP:10478"/>
        <dbReference type="ChEBI" id="CHEBI:15361"/>
        <dbReference type="ChEBI" id="CHEBI:15378"/>
        <dbReference type="ChEBI" id="CHEBI:16526"/>
        <dbReference type="ChEBI" id="CHEBI:83099"/>
        <dbReference type="ChEBI" id="CHEBI:83111"/>
        <dbReference type="EC" id="1.2.4.1"/>
    </reaction>
</comment>
<comment type="cofactor">
    <cofactor evidence="1">
        <name>thiamine diphosphate</name>
        <dbReference type="ChEBI" id="CHEBI:58937"/>
    </cofactor>
</comment>
<comment type="subunit">
    <text>Heterodimer of an alpha and a beta chain.</text>
</comment>
<comment type="interaction">
    <interactant intactId="EBI-2259629">
        <id>P75390</id>
    </interactant>
    <interactant intactId="EBI-1058602">
        <id>P02788</id>
        <label>LTF</label>
    </interactant>
    <organismsDiffer>true</organismsDiffer>
    <experiments>3</experiments>
</comment>
<comment type="interaction">
    <interactant intactId="EBI-2259629">
        <id>P75390</id>
    </interactant>
    <interactant intactId="EBI-999394">
        <id>P00747</id>
        <label>PLG</label>
    </interactant>
    <organismsDiffer>true</organismsDiffer>
    <experiments>5</experiments>
</comment>
<comment type="interaction">
    <interactant intactId="EBI-2259629">
        <id>P75390</id>
    </interactant>
    <interactant intactId="EBI-1036653">
        <id>P04004</id>
        <label>VTN</label>
    </interactant>
    <organismsDiffer>true</organismsDiffer>
    <experiments>3</experiments>
</comment>
<keyword id="KW-0560">Oxidoreductase</keyword>
<keyword id="KW-0670">Pyruvate</keyword>
<keyword id="KW-1185">Reference proteome</keyword>
<keyword id="KW-0786">Thiamine pyrophosphate</keyword>
<reference key="1">
    <citation type="journal article" date="1996" name="Nucleic Acids Res.">
        <title>Complete sequence analysis of the genome of the bacterium Mycoplasma pneumoniae.</title>
        <authorList>
            <person name="Himmelreich R."/>
            <person name="Hilbert H."/>
            <person name="Plagens H."/>
            <person name="Pirkl E."/>
            <person name="Li B.-C."/>
            <person name="Herrmann R."/>
        </authorList>
    </citation>
    <scope>NUCLEOTIDE SEQUENCE [LARGE SCALE GENOMIC DNA]</scope>
    <source>
        <strain>ATCC 29342 / M129 / Subtype 1</strain>
    </source>
</reference>
<sequence length="358" mass="40594">MAILIKNKVPTTLYQVYDNEGKLMDPNHKITLSNEQLKHAFYLMNLSRIMDKKMLVWQRAGKMLNFAPNLGEEALQVGMGMGLNENDWFCPTFRSGALMLYRGVKPEQLLLYWNGNENGSKIEAKYKTLPINITIGAQYSHAAGLGYMLHYKKLPNVAVTMIGDGGTAEGEFYEAMNIASIHKWNSVFCINNNQFAISTRTKLESAVSDLSTKAIAVNIPRIRVDGNDLIASYEAMHEAANYARSGNGPVLIEFFSWRQGPHTTSDDPSIYRTKEEEAEAMKSDPVKRLRNFLFDRGILTPQQEEEMVAKIEQEVQAAYEVMVSKTPVTLDEVFDYNYEKLTPDLARQKAEAKKYFKD</sequence>
<dbReference type="EC" id="1.2.4.1"/>
<dbReference type="EMBL" id="U00089">
    <property type="protein sequence ID" value="AAB96093.1"/>
    <property type="molecule type" value="Genomic_DNA"/>
</dbReference>
<dbReference type="PIR" id="S73771">
    <property type="entry name" value="S73771"/>
</dbReference>
<dbReference type="RefSeq" id="NP_110081.1">
    <property type="nucleotide sequence ID" value="NC_000912.1"/>
</dbReference>
<dbReference type="RefSeq" id="WP_010874749.1">
    <property type="nucleotide sequence ID" value="NZ_OU342337.1"/>
</dbReference>
<dbReference type="SMR" id="P75390"/>
<dbReference type="IntAct" id="P75390">
    <property type="interactions" value="7"/>
</dbReference>
<dbReference type="STRING" id="272634.MPN_393"/>
<dbReference type="EnsemblBacteria" id="AAB96093">
    <property type="protein sequence ID" value="AAB96093"/>
    <property type="gene ID" value="MPN_393"/>
</dbReference>
<dbReference type="GeneID" id="66608948"/>
<dbReference type="KEGG" id="mpn:MPN_393"/>
<dbReference type="PATRIC" id="fig|272634.6.peg.424"/>
<dbReference type="HOGENOM" id="CLU_029393_1_0_14"/>
<dbReference type="OrthoDB" id="9766715at2"/>
<dbReference type="BioCyc" id="MetaCyc:MONOMER-586"/>
<dbReference type="BioCyc" id="MPNE272634:G1GJ3-623-MONOMER"/>
<dbReference type="Proteomes" id="UP000000808">
    <property type="component" value="Chromosome"/>
</dbReference>
<dbReference type="GO" id="GO:0009986">
    <property type="term" value="C:cell surface"/>
    <property type="evidence" value="ECO:0000314"/>
    <property type="project" value="AgBase"/>
</dbReference>
<dbReference type="GO" id="GO:0005829">
    <property type="term" value="C:cytosol"/>
    <property type="evidence" value="ECO:0000314"/>
    <property type="project" value="AgBase"/>
</dbReference>
<dbReference type="GO" id="GO:0016020">
    <property type="term" value="C:membrane"/>
    <property type="evidence" value="ECO:0000314"/>
    <property type="project" value="AgBase"/>
</dbReference>
<dbReference type="GO" id="GO:0004739">
    <property type="term" value="F:pyruvate dehydrogenase (acetyl-transferring) activity"/>
    <property type="evidence" value="ECO:0007669"/>
    <property type="project" value="UniProtKB-EC"/>
</dbReference>
<dbReference type="GO" id="GO:0009083">
    <property type="term" value="P:branched-chain amino acid catabolic process"/>
    <property type="evidence" value="ECO:0007669"/>
    <property type="project" value="TreeGrafter"/>
</dbReference>
<dbReference type="CDD" id="cd02000">
    <property type="entry name" value="TPP_E1_PDC_ADC_BCADC"/>
    <property type="match status" value="1"/>
</dbReference>
<dbReference type="FunFam" id="3.40.50.970:FF:000134">
    <property type="entry name" value="Pyruvate dehydrogenase E1 component subunit alpha"/>
    <property type="match status" value="1"/>
</dbReference>
<dbReference type="Gene3D" id="3.40.50.970">
    <property type="match status" value="1"/>
</dbReference>
<dbReference type="InterPro" id="IPR050771">
    <property type="entry name" value="Alpha-ketoacid_DH_E1_comp"/>
</dbReference>
<dbReference type="InterPro" id="IPR001017">
    <property type="entry name" value="DH_E1"/>
</dbReference>
<dbReference type="InterPro" id="IPR017596">
    <property type="entry name" value="PdhA/BkdA"/>
</dbReference>
<dbReference type="InterPro" id="IPR029061">
    <property type="entry name" value="THDP-binding"/>
</dbReference>
<dbReference type="NCBIfam" id="TIGR03181">
    <property type="entry name" value="PDH_E1_alph_x"/>
    <property type="match status" value="1"/>
</dbReference>
<dbReference type="PANTHER" id="PTHR43380">
    <property type="entry name" value="2-OXOISOVALERATE DEHYDROGENASE SUBUNIT ALPHA, MITOCHONDRIAL"/>
    <property type="match status" value="1"/>
</dbReference>
<dbReference type="PANTHER" id="PTHR43380:SF1">
    <property type="entry name" value="2-OXOISOVALERATE DEHYDROGENASE SUBUNIT ALPHA, MITOCHONDRIAL"/>
    <property type="match status" value="1"/>
</dbReference>
<dbReference type="Pfam" id="PF00676">
    <property type="entry name" value="E1_dh"/>
    <property type="match status" value="1"/>
</dbReference>
<dbReference type="SUPFAM" id="SSF52518">
    <property type="entry name" value="Thiamin diphosphate-binding fold (THDP-binding)"/>
    <property type="match status" value="1"/>
</dbReference>
<evidence type="ECO:0000250" key="1"/>
<organism>
    <name type="scientific">Mycoplasma pneumoniae (strain ATCC 29342 / M129 / Subtype 1)</name>
    <name type="common">Mycoplasmoides pneumoniae</name>
    <dbReference type="NCBI Taxonomy" id="272634"/>
    <lineage>
        <taxon>Bacteria</taxon>
        <taxon>Bacillati</taxon>
        <taxon>Mycoplasmatota</taxon>
        <taxon>Mycoplasmoidales</taxon>
        <taxon>Mycoplasmoidaceae</taxon>
        <taxon>Mycoplasmoides</taxon>
    </lineage>
</organism>